<gene>
    <name evidence="1" type="primary">ruvA</name>
    <name type="ordered locus">BCAN_A1742</name>
</gene>
<organism>
    <name type="scientific">Brucella canis (strain ATCC 23365 / NCTC 10854 / RM-666)</name>
    <dbReference type="NCBI Taxonomy" id="483179"/>
    <lineage>
        <taxon>Bacteria</taxon>
        <taxon>Pseudomonadati</taxon>
        <taxon>Pseudomonadota</taxon>
        <taxon>Alphaproteobacteria</taxon>
        <taxon>Hyphomicrobiales</taxon>
        <taxon>Brucellaceae</taxon>
        <taxon>Brucella/Ochrobactrum group</taxon>
        <taxon>Brucella</taxon>
    </lineage>
</organism>
<accession>A9M7K1</accession>
<comment type="function">
    <text evidence="1">The RuvA-RuvB-RuvC complex processes Holliday junction (HJ) DNA during genetic recombination and DNA repair, while the RuvA-RuvB complex plays an important role in the rescue of blocked DNA replication forks via replication fork reversal (RFR). RuvA specifically binds to HJ cruciform DNA, conferring on it an open structure. The RuvB hexamer acts as an ATP-dependent pump, pulling dsDNA into and through the RuvAB complex. HJ branch migration allows RuvC to scan DNA until it finds its consensus sequence, where it cleaves and resolves the cruciform DNA.</text>
</comment>
<comment type="subunit">
    <text evidence="1">Homotetramer. Forms an RuvA(8)-RuvB(12)-Holliday junction (HJ) complex. HJ DNA is sandwiched between 2 RuvA tetramers; dsDNA enters through RuvA and exits via RuvB. An RuvB hexamer assembles on each DNA strand where it exits the tetramer. Each RuvB hexamer is contacted by two RuvA subunits (via domain III) on 2 adjacent RuvB subunits; this complex drives branch migration. In the full resolvosome a probable DNA-RuvA(4)-RuvB(12)-RuvC(2) complex forms which resolves the HJ.</text>
</comment>
<comment type="subcellular location">
    <subcellularLocation>
        <location evidence="1">Cytoplasm</location>
    </subcellularLocation>
</comment>
<comment type="domain">
    <text evidence="1">Has three domains with a flexible linker between the domains II and III and assumes an 'L' shape. Domain III is highly mobile and contacts RuvB.</text>
</comment>
<comment type="similarity">
    <text evidence="1">Belongs to the RuvA family.</text>
</comment>
<reference key="1">
    <citation type="submission" date="2007-10" db="EMBL/GenBank/DDBJ databases">
        <title>Brucella canis ATCC 23365 whole genome shotgun sequencing project.</title>
        <authorList>
            <person name="Setubal J.C."/>
            <person name="Bowns C."/>
            <person name="Boyle S."/>
            <person name="Crasta O.R."/>
            <person name="Czar M.J."/>
            <person name="Dharmanolla C."/>
            <person name="Gillespie J.J."/>
            <person name="Kenyon R.W."/>
            <person name="Lu J."/>
            <person name="Mane S."/>
            <person name="Mohapatra S."/>
            <person name="Nagrani S."/>
            <person name="Purkayastha A."/>
            <person name="Rajasimha H.K."/>
            <person name="Shallom J.M."/>
            <person name="Shallom S."/>
            <person name="Shukla M."/>
            <person name="Snyder E.E."/>
            <person name="Sobral B.W."/>
            <person name="Wattam A.R."/>
            <person name="Will R."/>
            <person name="Williams K."/>
            <person name="Yoo H."/>
            <person name="Bruce D."/>
            <person name="Detter C."/>
            <person name="Munk C."/>
            <person name="Brettin T.S."/>
        </authorList>
    </citation>
    <scope>NUCLEOTIDE SEQUENCE [LARGE SCALE GENOMIC DNA]</scope>
    <source>
        <strain>ATCC 23365 / NCTC 10854 / RM-666</strain>
    </source>
</reference>
<sequence length="205" mass="21227">MIGKLKGVIDEIAEDHAVIDVHGVGYVAFCSARTLGNLGGAGEAAILFIETYVREDMIRLYGFATQLEREWFRLLQNVQGVGAKVALAVLGTLSPSELANAIALRDIAMVSRAPGVGKKVAERIVTELKNKAPAFAGEASGTIGLKQELGAGAAPAPVADAVSALSNLGYSRDQAANAVAAALKETGEGADSAKLIRLGLKELSQ</sequence>
<dbReference type="EMBL" id="CP000872">
    <property type="protein sequence ID" value="ABX62748.1"/>
    <property type="molecule type" value="Genomic_DNA"/>
</dbReference>
<dbReference type="RefSeq" id="WP_002964792.1">
    <property type="nucleotide sequence ID" value="NC_010103.1"/>
</dbReference>
<dbReference type="SMR" id="A9M7K1"/>
<dbReference type="GeneID" id="97533143"/>
<dbReference type="KEGG" id="bcs:BCAN_A1742"/>
<dbReference type="HOGENOM" id="CLU_087936_3_0_5"/>
<dbReference type="PhylomeDB" id="A9M7K1"/>
<dbReference type="Proteomes" id="UP000001385">
    <property type="component" value="Chromosome I"/>
</dbReference>
<dbReference type="GO" id="GO:0005737">
    <property type="term" value="C:cytoplasm"/>
    <property type="evidence" value="ECO:0007669"/>
    <property type="project" value="UniProtKB-SubCell"/>
</dbReference>
<dbReference type="GO" id="GO:0009379">
    <property type="term" value="C:Holliday junction helicase complex"/>
    <property type="evidence" value="ECO:0007669"/>
    <property type="project" value="InterPro"/>
</dbReference>
<dbReference type="GO" id="GO:0048476">
    <property type="term" value="C:Holliday junction resolvase complex"/>
    <property type="evidence" value="ECO:0007669"/>
    <property type="project" value="UniProtKB-UniRule"/>
</dbReference>
<dbReference type="GO" id="GO:0005524">
    <property type="term" value="F:ATP binding"/>
    <property type="evidence" value="ECO:0007669"/>
    <property type="project" value="InterPro"/>
</dbReference>
<dbReference type="GO" id="GO:0000400">
    <property type="term" value="F:four-way junction DNA binding"/>
    <property type="evidence" value="ECO:0007669"/>
    <property type="project" value="UniProtKB-UniRule"/>
</dbReference>
<dbReference type="GO" id="GO:0009378">
    <property type="term" value="F:four-way junction helicase activity"/>
    <property type="evidence" value="ECO:0007669"/>
    <property type="project" value="InterPro"/>
</dbReference>
<dbReference type="GO" id="GO:0006310">
    <property type="term" value="P:DNA recombination"/>
    <property type="evidence" value="ECO:0007669"/>
    <property type="project" value="UniProtKB-UniRule"/>
</dbReference>
<dbReference type="GO" id="GO:0006281">
    <property type="term" value="P:DNA repair"/>
    <property type="evidence" value="ECO:0007669"/>
    <property type="project" value="UniProtKB-UniRule"/>
</dbReference>
<dbReference type="Gene3D" id="1.10.150.20">
    <property type="entry name" value="5' to 3' exonuclease, C-terminal subdomain"/>
    <property type="match status" value="1"/>
</dbReference>
<dbReference type="Gene3D" id="1.10.8.10">
    <property type="entry name" value="DNA helicase RuvA subunit, C-terminal domain"/>
    <property type="match status" value="1"/>
</dbReference>
<dbReference type="Gene3D" id="2.40.50.140">
    <property type="entry name" value="Nucleic acid-binding proteins"/>
    <property type="match status" value="1"/>
</dbReference>
<dbReference type="HAMAP" id="MF_00031">
    <property type="entry name" value="DNA_HJ_migration_RuvA"/>
    <property type="match status" value="1"/>
</dbReference>
<dbReference type="InterPro" id="IPR013849">
    <property type="entry name" value="DNA_helicase_Holl-junc_RuvA_I"/>
</dbReference>
<dbReference type="InterPro" id="IPR003583">
    <property type="entry name" value="Hlx-hairpin-Hlx_DNA-bd_motif"/>
</dbReference>
<dbReference type="InterPro" id="IPR012340">
    <property type="entry name" value="NA-bd_OB-fold"/>
</dbReference>
<dbReference type="InterPro" id="IPR000085">
    <property type="entry name" value="RuvA"/>
</dbReference>
<dbReference type="InterPro" id="IPR010994">
    <property type="entry name" value="RuvA_2-like"/>
</dbReference>
<dbReference type="InterPro" id="IPR011114">
    <property type="entry name" value="RuvA_C"/>
</dbReference>
<dbReference type="InterPro" id="IPR036267">
    <property type="entry name" value="RuvA_C_sf"/>
</dbReference>
<dbReference type="NCBIfam" id="TIGR00084">
    <property type="entry name" value="ruvA"/>
    <property type="match status" value="1"/>
</dbReference>
<dbReference type="Pfam" id="PF14520">
    <property type="entry name" value="HHH_5"/>
    <property type="match status" value="1"/>
</dbReference>
<dbReference type="Pfam" id="PF07499">
    <property type="entry name" value="RuvA_C"/>
    <property type="match status" value="1"/>
</dbReference>
<dbReference type="Pfam" id="PF01330">
    <property type="entry name" value="RuvA_N"/>
    <property type="match status" value="1"/>
</dbReference>
<dbReference type="SMART" id="SM00278">
    <property type="entry name" value="HhH1"/>
    <property type="match status" value="2"/>
</dbReference>
<dbReference type="SUPFAM" id="SSF46929">
    <property type="entry name" value="DNA helicase RuvA subunit, C-terminal domain"/>
    <property type="match status" value="1"/>
</dbReference>
<dbReference type="SUPFAM" id="SSF50249">
    <property type="entry name" value="Nucleic acid-binding proteins"/>
    <property type="match status" value="1"/>
</dbReference>
<dbReference type="SUPFAM" id="SSF47781">
    <property type="entry name" value="RuvA domain 2-like"/>
    <property type="match status" value="1"/>
</dbReference>
<feature type="chain" id="PRO_1000074411" description="Holliday junction branch migration complex subunit RuvA">
    <location>
        <begin position="1"/>
        <end position="205"/>
    </location>
</feature>
<feature type="region of interest" description="Domain I" evidence="1">
    <location>
        <begin position="1"/>
        <end position="64"/>
    </location>
</feature>
<feature type="region of interest" description="Domain II" evidence="1">
    <location>
        <begin position="65"/>
        <end position="143"/>
    </location>
</feature>
<feature type="region of interest" description="Flexible linker" evidence="1">
    <location>
        <begin position="144"/>
        <end position="152"/>
    </location>
</feature>
<feature type="region of interest" description="Domain III" evidence="1">
    <location>
        <begin position="153"/>
        <end position="205"/>
    </location>
</feature>
<name>RUVA_BRUC2</name>
<keyword id="KW-0963">Cytoplasm</keyword>
<keyword id="KW-0227">DNA damage</keyword>
<keyword id="KW-0233">DNA recombination</keyword>
<keyword id="KW-0234">DNA repair</keyword>
<keyword id="KW-0238">DNA-binding</keyword>
<keyword id="KW-1185">Reference proteome</keyword>
<protein>
    <recommendedName>
        <fullName evidence="1">Holliday junction branch migration complex subunit RuvA</fullName>
    </recommendedName>
</protein>
<evidence type="ECO:0000255" key="1">
    <source>
        <dbReference type="HAMAP-Rule" id="MF_00031"/>
    </source>
</evidence>
<proteinExistence type="inferred from homology"/>